<protein>
    <recommendedName>
        <fullName evidence="1">Probable acid stress chaperone HdeA</fullName>
    </recommendedName>
</protein>
<gene>
    <name evidence="1" type="primary">hdeA</name>
    <name type="ordered locus">BOV_A0312</name>
</gene>
<organism>
    <name type="scientific">Brucella ovis (strain ATCC 25840 / 63/290 / NCTC 10512)</name>
    <dbReference type="NCBI Taxonomy" id="444178"/>
    <lineage>
        <taxon>Bacteria</taxon>
        <taxon>Pseudomonadati</taxon>
        <taxon>Pseudomonadota</taxon>
        <taxon>Alphaproteobacteria</taxon>
        <taxon>Hyphomicrobiales</taxon>
        <taxon>Brucellaceae</taxon>
        <taxon>Brucella/Ochrobactrum group</taxon>
        <taxon>Brucella</taxon>
    </lineage>
</organism>
<proteinExistence type="inferred from homology"/>
<feature type="signal peptide" evidence="1">
    <location>
        <begin position="1"/>
        <end position="26"/>
    </location>
</feature>
<feature type="chain" id="PRO_0000338635" description="Probable acid stress chaperone HdeA">
    <location>
        <begin position="27"/>
        <end position="114"/>
    </location>
</feature>
<feature type="disulfide bond" evidence="1">
    <location>
        <begin position="46"/>
        <end position="94"/>
    </location>
</feature>
<sequence>MIKTLFNKNTALAAVAILALSGSAMAESAKTHKTDMAKKKVSELTCEDFNGLEESFKPTVVGWVVGFNKKGKEEDAVIDVDGIETVTPAIIEACKQEPKASFWKKAEAELKKVF</sequence>
<comment type="function">
    <text evidence="1">Required for optimal acid stress protection. Exhibits a chaperone-like activity only at low pH by suppressing non-specifically the aggregation of denaturated periplasmic proteins.</text>
</comment>
<comment type="subcellular location">
    <subcellularLocation>
        <location evidence="1">Periplasm</location>
    </subcellularLocation>
</comment>
<comment type="similarity">
    <text evidence="1">Belongs to the HdeA family.</text>
</comment>
<evidence type="ECO:0000255" key="1">
    <source>
        <dbReference type="HAMAP-Rule" id="MF_00946"/>
    </source>
</evidence>
<keyword id="KW-0143">Chaperone</keyword>
<keyword id="KW-1015">Disulfide bond</keyword>
<keyword id="KW-0574">Periplasm</keyword>
<keyword id="KW-0732">Signal</keyword>
<dbReference type="EMBL" id="CP000709">
    <property type="protein sequence ID" value="ABQ62812.1"/>
    <property type="molecule type" value="Genomic_DNA"/>
</dbReference>
<dbReference type="RefSeq" id="WP_006015518.1">
    <property type="nucleotide sequence ID" value="NC_009504.1"/>
</dbReference>
<dbReference type="SMR" id="A5VU57"/>
<dbReference type="GeneID" id="45125720"/>
<dbReference type="KEGG" id="bov:BOV_A0312"/>
<dbReference type="HOGENOM" id="CLU_170142_0_0_5"/>
<dbReference type="PhylomeDB" id="A5VU57"/>
<dbReference type="PRO" id="PR:A5VU57"/>
<dbReference type="Proteomes" id="UP000006383">
    <property type="component" value="Chromosome II"/>
</dbReference>
<dbReference type="GO" id="GO:0030288">
    <property type="term" value="C:outer membrane-bounded periplasmic space"/>
    <property type="evidence" value="ECO:0007669"/>
    <property type="project" value="InterPro"/>
</dbReference>
<dbReference type="GO" id="GO:1990451">
    <property type="term" value="P:cellular stress response to acidic pH"/>
    <property type="evidence" value="ECO:0007669"/>
    <property type="project" value="UniProtKB-UniRule"/>
</dbReference>
<dbReference type="Gene3D" id="1.10.890.10">
    <property type="entry name" value="HNS-dependent expression A"/>
    <property type="match status" value="1"/>
</dbReference>
<dbReference type="HAMAP" id="MF_00946">
    <property type="entry name" value="HdeA"/>
    <property type="match status" value="1"/>
</dbReference>
<dbReference type="InterPro" id="IPR024972">
    <property type="entry name" value="HdeA"/>
</dbReference>
<dbReference type="InterPro" id="IPR038303">
    <property type="entry name" value="HdeA/HdeB_sf"/>
</dbReference>
<dbReference type="InterPro" id="IPR036831">
    <property type="entry name" value="HdeA_sf"/>
</dbReference>
<dbReference type="InterPro" id="IPR010486">
    <property type="entry name" value="HNS-dep_expression_A/B"/>
</dbReference>
<dbReference type="NCBIfam" id="NF007576">
    <property type="entry name" value="PRK10208.1"/>
    <property type="match status" value="1"/>
</dbReference>
<dbReference type="Pfam" id="PF06411">
    <property type="entry name" value="HdeA"/>
    <property type="match status" value="1"/>
</dbReference>
<dbReference type="PIRSF" id="PIRSF009564">
    <property type="entry name" value="HNS-dep_expression_A"/>
    <property type="match status" value="1"/>
</dbReference>
<dbReference type="SUPFAM" id="SSF47752">
    <property type="entry name" value="Protein HNS-dependent expression A, HdeA"/>
    <property type="match status" value="1"/>
</dbReference>
<name>HDEA_BRUO2</name>
<accession>A5VU57</accession>
<reference key="1">
    <citation type="journal article" date="2009" name="PLoS ONE">
        <title>Genome degradation in Brucella ovis corresponds with narrowing of its host range and tissue tropism.</title>
        <authorList>
            <person name="Tsolis R.M."/>
            <person name="Seshadri R."/>
            <person name="Santos R.L."/>
            <person name="Sangari F.J."/>
            <person name="Lobo J.M."/>
            <person name="de Jong M.F."/>
            <person name="Ren Q."/>
            <person name="Myers G."/>
            <person name="Brinkac L.M."/>
            <person name="Nelson W.C."/>
            <person name="Deboy R.T."/>
            <person name="Angiuoli S."/>
            <person name="Khouri H."/>
            <person name="Dimitrov G."/>
            <person name="Robinson J.R."/>
            <person name="Mulligan S."/>
            <person name="Walker R.L."/>
            <person name="Elzer P.E."/>
            <person name="Hassan K.A."/>
            <person name="Paulsen I.T."/>
        </authorList>
    </citation>
    <scope>NUCLEOTIDE SEQUENCE [LARGE SCALE GENOMIC DNA]</scope>
    <source>
        <strain>ATCC 25840 / 63/290 / NCTC 10512</strain>
    </source>
</reference>